<sequence>MTNAVTVKNITFQEGETLICVPLIGKTLDEILGNAHGLVDAGADIIEWRVDHFTQVRDMTQVMAALAEIRGALKALPLLFTFRSKKEGGETEISDEAYFALNREAARSGLVDVIDIELFNDEAQIHALVDDAHAAGVKVIMSNHDFHKTPAQEDIIYRLRRMQDLGADLPKIAVMPQSPQDVLTLLAATLTMKEKYATRPLITMSMGKSGGVSRVTGRLFGSAMTFGTVGQASAPGQIAIAKLREVMDILS</sequence>
<name>AROD_KLEP3</name>
<dbReference type="EC" id="4.2.1.10" evidence="1"/>
<dbReference type="EMBL" id="CP000964">
    <property type="protein sequence ID" value="ACI07351.1"/>
    <property type="molecule type" value="Genomic_DNA"/>
</dbReference>
<dbReference type="SMR" id="B5Y1W9"/>
<dbReference type="KEGG" id="kpe:KPK_4669"/>
<dbReference type="HOGENOM" id="CLU_064444_0_0_6"/>
<dbReference type="UniPathway" id="UPA00053">
    <property type="reaction ID" value="UER00086"/>
</dbReference>
<dbReference type="Proteomes" id="UP000001734">
    <property type="component" value="Chromosome"/>
</dbReference>
<dbReference type="GO" id="GO:0003855">
    <property type="term" value="F:3-dehydroquinate dehydratase activity"/>
    <property type="evidence" value="ECO:0007669"/>
    <property type="project" value="UniProtKB-UniRule"/>
</dbReference>
<dbReference type="GO" id="GO:0046279">
    <property type="term" value="P:3,4-dihydroxybenzoate biosynthetic process"/>
    <property type="evidence" value="ECO:0007669"/>
    <property type="project" value="TreeGrafter"/>
</dbReference>
<dbReference type="GO" id="GO:0008652">
    <property type="term" value="P:amino acid biosynthetic process"/>
    <property type="evidence" value="ECO:0007669"/>
    <property type="project" value="UniProtKB-KW"/>
</dbReference>
<dbReference type="GO" id="GO:0009073">
    <property type="term" value="P:aromatic amino acid family biosynthetic process"/>
    <property type="evidence" value="ECO:0007669"/>
    <property type="project" value="UniProtKB-KW"/>
</dbReference>
<dbReference type="GO" id="GO:0009423">
    <property type="term" value="P:chorismate biosynthetic process"/>
    <property type="evidence" value="ECO:0007669"/>
    <property type="project" value="UniProtKB-UniRule"/>
</dbReference>
<dbReference type="CDD" id="cd00502">
    <property type="entry name" value="DHQase_I"/>
    <property type="match status" value="1"/>
</dbReference>
<dbReference type="FunFam" id="3.20.20.70:FF:000047">
    <property type="entry name" value="3-dehydroquinate dehydratase"/>
    <property type="match status" value="1"/>
</dbReference>
<dbReference type="Gene3D" id="3.20.20.70">
    <property type="entry name" value="Aldolase class I"/>
    <property type="match status" value="1"/>
</dbReference>
<dbReference type="HAMAP" id="MF_00214">
    <property type="entry name" value="AroD"/>
    <property type="match status" value="1"/>
</dbReference>
<dbReference type="InterPro" id="IPR018508">
    <property type="entry name" value="3-dehydroquinate_DH_AS"/>
</dbReference>
<dbReference type="InterPro" id="IPR013785">
    <property type="entry name" value="Aldolase_TIM"/>
</dbReference>
<dbReference type="InterPro" id="IPR001381">
    <property type="entry name" value="DHquinase_I"/>
</dbReference>
<dbReference type="InterPro" id="IPR050146">
    <property type="entry name" value="Type-I_3-dehydroquinase"/>
</dbReference>
<dbReference type="NCBIfam" id="TIGR01093">
    <property type="entry name" value="aroD"/>
    <property type="match status" value="1"/>
</dbReference>
<dbReference type="PANTHER" id="PTHR43699">
    <property type="entry name" value="3-DEHYDROQUINATE DEHYDRATASE"/>
    <property type="match status" value="1"/>
</dbReference>
<dbReference type="PANTHER" id="PTHR43699:SF1">
    <property type="entry name" value="3-DEHYDROQUINATE DEHYDRATASE"/>
    <property type="match status" value="1"/>
</dbReference>
<dbReference type="Pfam" id="PF01487">
    <property type="entry name" value="DHquinase_I"/>
    <property type="match status" value="1"/>
</dbReference>
<dbReference type="SUPFAM" id="SSF51569">
    <property type="entry name" value="Aldolase"/>
    <property type="match status" value="1"/>
</dbReference>
<dbReference type="PROSITE" id="PS01028">
    <property type="entry name" value="DEHYDROQUINASE_I"/>
    <property type="match status" value="1"/>
</dbReference>
<evidence type="ECO:0000255" key="1">
    <source>
        <dbReference type="HAMAP-Rule" id="MF_00214"/>
    </source>
</evidence>
<feature type="chain" id="PRO_1000099909" description="3-dehydroquinate dehydratase">
    <location>
        <begin position="1"/>
        <end position="251"/>
    </location>
</feature>
<feature type="active site" description="Proton donor/acceptor" evidence="1">
    <location>
        <position position="144"/>
    </location>
</feature>
<feature type="active site" description="Schiff-base intermediate with substrate" evidence="1">
    <location>
        <position position="171"/>
    </location>
</feature>
<feature type="binding site" evidence="1">
    <location>
        <begin position="47"/>
        <end position="49"/>
    </location>
    <ligand>
        <name>3-dehydroquinate</name>
        <dbReference type="ChEBI" id="CHEBI:32364"/>
    </ligand>
</feature>
<feature type="binding site" evidence="1">
    <location>
        <position position="83"/>
    </location>
    <ligand>
        <name>3-dehydroquinate</name>
        <dbReference type="ChEBI" id="CHEBI:32364"/>
    </ligand>
</feature>
<feature type="binding site" evidence="1">
    <location>
        <position position="214"/>
    </location>
    <ligand>
        <name>3-dehydroquinate</name>
        <dbReference type="ChEBI" id="CHEBI:32364"/>
    </ligand>
</feature>
<feature type="binding site" evidence="1">
    <location>
        <position position="233"/>
    </location>
    <ligand>
        <name>3-dehydroquinate</name>
        <dbReference type="ChEBI" id="CHEBI:32364"/>
    </ligand>
</feature>
<feature type="binding site" evidence="1">
    <location>
        <position position="237"/>
    </location>
    <ligand>
        <name>3-dehydroquinate</name>
        <dbReference type="ChEBI" id="CHEBI:32364"/>
    </ligand>
</feature>
<comment type="function">
    <text evidence="1">Involved in the third step of the chorismate pathway, which leads to the biosynthesis of aromatic amino acids. Catalyzes the cis-dehydration of 3-dehydroquinate (DHQ) and introduces the first double bond of the aromatic ring to yield 3-dehydroshikimate.</text>
</comment>
<comment type="catalytic activity">
    <reaction evidence="1">
        <text>3-dehydroquinate = 3-dehydroshikimate + H2O</text>
        <dbReference type="Rhea" id="RHEA:21096"/>
        <dbReference type="ChEBI" id="CHEBI:15377"/>
        <dbReference type="ChEBI" id="CHEBI:16630"/>
        <dbReference type="ChEBI" id="CHEBI:32364"/>
        <dbReference type="EC" id="4.2.1.10"/>
    </reaction>
</comment>
<comment type="pathway">
    <text evidence="1">Metabolic intermediate biosynthesis; chorismate biosynthesis; chorismate from D-erythrose 4-phosphate and phosphoenolpyruvate: step 3/7.</text>
</comment>
<comment type="subunit">
    <text evidence="1">Homodimer.</text>
</comment>
<comment type="similarity">
    <text evidence="1">Belongs to the type-I 3-dehydroquinase family.</text>
</comment>
<accession>B5Y1W9</accession>
<organism>
    <name type="scientific">Klebsiella pneumoniae (strain 342)</name>
    <dbReference type="NCBI Taxonomy" id="507522"/>
    <lineage>
        <taxon>Bacteria</taxon>
        <taxon>Pseudomonadati</taxon>
        <taxon>Pseudomonadota</taxon>
        <taxon>Gammaproteobacteria</taxon>
        <taxon>Enterobacterales</taxon>
        <taxon>Enterobacteriaceae</taxon>
        <taxon>Klebsiella/Raoultella group</taxon>
        <taxon>Klebsiella</taxon>
        <taxon>Klebsiella pneumoniae complex</taxon>
    </lineage>
</organism>
<reference key="1">
    <citation type="journal article" date="2008" name="PLoS Genet.">
        <title>Complete genome sequence of the N2-fixing broad host range endophyte Klebsiella pneumoniae 342 and virulence predictions verified in mice.</title>
        <authorList>
            <person name="Fouts D.E."/>
            <person name="Tyler H.L."/>
            <person name="DeBoy R.T."/>
            <person name="Daugherty S."/>
            <person name="Ren Q."/>
            <person name="Badger J.H."/>
            <person name="Durkin A.S."/>
            <person name="Huot H."/>
            <person name="Shrivastava S."/>
            <person name="Kothari S."/>
            <person name="Dodson R.J."/>
            <person name="Mohamoud Y."/>
            <person name="Khouri H."/>
            <person name="Roesch L.F.W."/>
            <person name="Krogfelt K.A."/>
            <person name="Struve C."/>
            <person name="Triplett E.W."/>
            <person name="Methe B.A."/>
        </authorList>
    </citation>
    <scope>NUCLEOTIDE SEQUENCE [LARGE SCALE GENOMIC DNA]</scope>
    <source>
        <strain>342</strain>
    </source>
</reference>
<gene>
    <name evidence="1" type="primary">aroD</name>
    <name type="ordered locus">KPK_4669</name>
</gene>
<protein>
    <recommendedName>
        <fullName evidence="1">3-dehydroquinate dehydratase</fullName>
        <shortName evidence="1">3-dehydroquinase</shortName>
        <ecNumber evidence="1">4.2.1.10</ecNumber>
    </recommendedName>
    <alternativeName>
        <fullName evidence="1">Type I DHQase</fullName>
    </alternativeName>
    <alternativeName>
        <fullName evidence="1">Type I dehydroquinase</fullName>
        <shortName evidence="1">DHQ1</shortName>
    </alternativeName>
</protein>
<keyword id="KW-0028">Amino-acid biosynthesis</keyword>
<keyword id="KW-0057">Aromatic amino acid biosynthesis</keyword>
<keyword id="KW-0456">Lyase</keyword>
<keyword id="KW-0704">Schiff base</keyword>
<proteinExistence type="inferred from homology"/>